<proteinExistence type="evidence at protein level"/>
<protein>
    <recommendedName>
        <fullName>Mitochondrial peptide methionine sulfoxide reductase</fullName>
        <ecNumber evidence="3">1.8.4.11</ecNumber>
    </recommendedName>
    <alternativeName>
        <fullName>Peptide-methionine (S)-S-oxide reductase</fullName>
        <shortName>Peptide Met(O) reductase</shortName>
    </alternativeName>
    <alternativeName>
        <fullName>Protein-methionine-S-oxide reductase</fullName>
    </alternativeName>
</protein>
<comment type="function">
    <text>Has an important function as a repair enzyme for proteins that have been inactivated by oxidation. Catalyzes the reversible oxidation-reduction of methionine sulfoxide in proteins to methionine.</text>
</comment>
<comment type="catalytic activity">
    <reaction evidence="3">
        <text>L-methionyl-[protein] + [thioredoxin]-disulfide + H2O = L-methionyl-(S)-S-oxide-[protein] + [thioredoxin]-dithiol</text>
        <dbReference type="Rhea" id="RHEA:14217"/>
        <dbReference type="Rhea" id="RHEA-COMP:10698"/>
        <dbReference type="Rhea" id="RHEA-COMP:10700"/>
        <dbReference type="Rhea" id="RHEA-COMP:12313"/>
        <dbReference type="Rhea" id="RHEA-COMP:12315"/>
        <dbReference type="ChEBI" id="CHEBI:15377"/>
        <dbReference type="ChEBI" id="CHEBI:16044"/>
        <dbReference type="ChEBI" id="CHEBI:29950"/>
        <dbReference type="ChEBI" id="CHEBI:44120"/>
        <dbReference type="ChEBI" id="CHEBI:50058"/>
        <dbReference type="EC" id="1.8.4.11"/>
    </reaction>
</comment>
<comment type="catalytic activity">
    <reaction evidence="3">
        <text>[thioredoxin]-disulfide + L-methionine + H2O = L-methionine (S)-S-oxide + [thioredoxin]-dithiol</text>
        <dbReference type="Rhea" id="RHEA:19993"/>
        <dbReference type="Rhea" id="RHEA-COMP:10698"/>
        <dbReference type="Rhea" id="RHEA-COMP:10700"/>
        <dbReference type="ChEBI" id="CHEBI:15377"/>
        <dbReference type="ChEBI" id="CHEBI:29950"/>
        <dbReference type="ChEBI" id="CHEBI:50058"/>
        <dbReference type="ChEBI" id="CHEBI:57844"/>
        <dbReference type="ChEBI" id="CHEBI:58772"/>
        <dbReference type="EC" id="1.8.4.11"/>
    </reaction>
</comment>
<comment type="subcellular location">
    <subcellularLocation>
        <location evidence="1">Mitochondrion</location>
    </subcellularLocation>
</comment>
<comment type="similarity">
    <text evidence="4">Belongs to the MsrA Met sulfoxide reductase family.</text>
</comment>
<gene>
    <name type="primary">MSRA</name>
</gene>
<keyword id="KW-0002">3D-structure</keyword>
<keyword id="KW-0007">Acetylation</keyword>
<keyword id="KW-1015">Disulfide bond</keyword>
<keyword id="KW-0496">Mitochondrion</keyword>
<keyword id="KW-0560">Oxidoreductase</keyword>
<keyword id="KW-0676">Redox-active center</keyword>
<keyword id="KW-1185">Reference proteome</keyword>
<keyword id="KW-0809">Transit peptide</keyword>
<reference key="1">
    <citation type="journal article" date="1996" name="Proc. Natl. Acad. Sci. U.S.A.">
        <title>Cloning the expression of a mammalian gene involved in the reduction of methionine sulfoxide residues in proteins.</title>
        <authorList>
            <person name="Moskovitz J."/>
            <person name="Weissbach H."/>
            <person name="Brot N."/>
        </authorList>
    </citation>
    <scope>NUCLEOTIDE SEQUENCE [MRNA]</scope>
    <source>
        <tissue>Adrenal medulla</tissue>
    </source>
</reference>
<reference key="2">
    <citation type="journal article" date="2005" name="BMC Genomics">
        <title>Characterization of 954 bovine full-CDS cDNA sequences.</title>
        <authorList>
            <person name="Harhay G.P."/>
            <person name="Sonstegard T.S."/>
            <person name="Keele J.W."/>
            <person name="Heaton M.P."/>
            <person name="Clawson M.L."/>
            <person name="Snelling W.M."/>
            <person name="Wiedmann R.T."/>
            <person name="Van Tassell C.P."/>
            <person name="Smith T.P.L."/>
        </authorList>
    </citation>
    <scope>NUCLEOTIDE SEQUENCE [LARGE SCALE MRNA]</scope>
</reference>
<reference key="3">
    <citation type="submission" date="2005-08" db="EMBL/GenBank/DDBJ databases">
        <authorList>
            <consortium name="NIH - Mammalian Gene Collection (MGC) project"/>
        </authorList>
    </citation>
    <scope>NUCLEOTIDE SEQUENCE [LARGE SCALE MRNA]</scope>
    <source>
        <strain>Hereford</strain>
        <tissue>Hypothalamus</tissue>
    </source>
</reference>
<reference key="4">
    <citation type="journal article" date="2000" name="Biochemistry">
        <title>Structure and mechanism of peptide methionine sulfoxide reductase, an 'anti-oxidation' enzyme.</title>
        <authorList>
            <person name="Lowther W.T."/>
            <person name="Brot N."/>
            <person name="Weissbach H."/>
            <person name="Matthews B.W."/>
        </authorList>
    </citation>
    <scope>X-RAY CRYSTALLOGRAPHY (1.6 ANGSTROMS)</scope>
</reference>
<feature type="transit peptide" description="Mitochondrion" evidence="1">
    <location>
        <begin position="1"/>
        <end position="20"/>
    </location>
</feature>
<feature type="chain" id="PRO_0000138625" description="Mitochondrial peptide methionine sulfoxide reductase">
    <location>
        <begin position="21"/>
        <end position="233"/>
    </location>
</feature>
<feature type="active site" description="Cysteine sulfenic acid (-SOH) intermediate" evidence="2">
    <location>
        <position position="72"/>
    </location>
</feature>
<feature type="modified residue" description="N6-acetyllysine; alternate" evidence="3">
    <location>
        <position position="104"/>
    </location>
</feature>
<feature type="modified residue" description="N6-succinyllysine; alternate" evidence="3">
    <location>
        <position position="104"/>
    </location>
</feature>
<feature type="disulfide bond" description="Redox-active; alternate" evidence="2">
    <location>
        <begin position="72"/>
        <end position="218"/>
    </location>
</feature>
<feature type="disulfide bond" description="Redox-active; alternate" evidence="2">
    <location>
        <begin position="218"/>
        <end position="227"/>
    </location>
</feature>
<feature type="sequence conflict" description="In Ref. 1; AAC48539." evidence="4" ref="1">
    <original>A</original>
    <variation>V</variation>
    <location>
        <position position="4"/>
    </location>
</feature>
<feature type="sequence conflict" description="In Ref. 2; AAX09061." evidence="4" ref="2">
    <original>H</original>
    <variation>R</variation>
    <location>
        <position position="125"/>
    </location>
</feature>
<feature type="turn" evidence="5">
    <location>
        <begin position="31"/>
        <end position="33"/>
    </location>
</feature>
<feature type="turn" evidence="5">
    <location>
        <begin position="49"/>
        <end position="51"/>
    </location>
</feature>
<feature type="strand" evidence="5">
    <location>
        <begin position="56"/>
        <end position="58"/>
    </location>
</feature>
<feature type="strand" evidence="5">
    <location>
        <begin position="64"/>
        <end position="72"/>
    </location>
</feature>
<feature type="helix" evidence="5">
    <location>
        <begin position="73"/>
        <end position="81"/>
    </location>
</feature>
<feature type="strand" evidence="5">
    <location>
        <begin position="86"/>
        <end position="97"/>
    </location>
</feature>
<feature type="helix" evidence="5">
    <location>
        <begin position="103"/>
        <end position="107"/>
    </location>
</feature>
<feature type="strand" evidence="5">
    <location>
        <begin position="114"/>
        <end position="121"/>
    </location>
</feature>
<feature type="turn" evidence="5">
    <location>
        <begin position="123"/>
        <end position="125"/>
    </location>
</feature>
<feature type="helix" evidence="5">
    <location>
        <begin position="128"/>
        <end position="137"/>
    </location>
</feature>
<feature type="strand" evidence="5">
    <location>
        <begin position="144"/>
        <end position="147"/>
    </location>
</feature>
<feature type="strand" evidence="5">
    <location>
        <begin position="150"/>
        <end position="152"/>
    </location>
</feature>
<feature type="helix" evidence="5">
    <location>
        <begin position="153"/>
        <end position="155"/>
    </location>
</feature>
<feature type="strand" evidence="5">
    <location>
        <begin position="157"/>
        <end position="159"/>
    </location>
</feature>
<feature type="helix" evidence="5">
    <location>
        <begin position="164"/>
        <end position="183"/>
    </location>
</feature>
<feature type="helix" evidence="5">
    <location>
        <begin position="204"/>
        <end position="206"/>
    </location>
</feature>
<feature type="helix" evidence="5">
    <location>
        <begin position="209"/>
        <end position="212"/>
    </location>
</feature>
<name>MSRA_BOVIN</name>
<organism>
    <name type="scientific">Bos taurus</name>
    <name type="common">Bovine</name>
    <dbReference type="NCBI Taxonomy" id="9913"/>
    <lineage>
        <taxon>Eukaryota</taxon>
        <taxon>Metazoa</taxon>
        <taxon>Chordata</taxon>
        <taxon>Craniata</taxon>
        <taxon>Vertebrata</taxon>
        <taxon>Euteleostomi</taxon>
        <taxon>Mammalia</taxon>
        <taxon>Eutheria</taxon>
        <taxon>Laurasiatheria</taxon>
        <taxon>Artiodactyla</taxon>
        <taxon>Ruminantia</taxon>
        <taxon>Pecora</taxon>
        <taxon>Bovidae</taxon>
        <taxon>Bovinae</taxon>
        <taxon>Bos</taxon>
    </lineage>
</organism>
<evidence type="ECO:0000250" key="1"/>
<evidence type="ECO:0000250" key="2">
    <source>
        <dbReference type="UniProtKB" id="P0A744"/>
    </source>
</evidence>
<evidence type="ECO:0000250" key="3">
    <source>
        <dbReference type="UniProtKB" id="Q9D6Y7"/>
    </source>
</evidence>
<evidence type="ECO:0000305" key="4"/>
<evidence type="ECO:0007829" key="5">
    <source>
        <dbReference type="PDB" id="1FVG"/>
    </source>
</evidence>
<accession>P54149</accession>
<accession>Q3ZC16</accession>
<accession>Q5E976</accession>
<sequence length="233" mass="25818">MLSATRRALQLFHSLFPIPRMGDSAAKIVSPQEALPGRKEPLVVAAKHHVNGNRTVEPFPEGTQMAVFGMGCFWGAERKFWTLKGVYSTQVGFAGGYTPNPTYKEVCSGKTGHAEVVRVVFQPEHISFEELLKVFWENHDPTQGMRQGNDHGSQYRSAIYPTSAEHVGAALKSKEDYQKVLSEHGFGLITTDIREGQTFYYAEDYHQQYLSKDPDGYCGLGGTGVSCPLGIKK</sequence>
<dbReference type="EC" id="1.8.4.11" evidence="3"/>
<dbReference type="EMBL" id="U37150">
    <property type="protein sequence ID" value="AAC48539.1"/>
    <property type="molecule type" value="mRNA"/>
</dbReference>
<dbReference type="EMBL" id="BT021044">
    <property type="protein sequence ID" value="AAX09061.1"/>
    <property type="molecule type" value="mRNA"/>
</dbReference>
<dbReference type="EMBL" id="BC102980">
    <property type="protein sequence ID" value="AAI02981.1"/>
    <property type="molecule type" value="mRNA"/>
</dbReference>
<dbReference type="RefSeq" id="NP_776539.1">
    <property type="nucleotide sequence ID" value="NM_174114.2"/>
</dbReference>
<dbReference type="PDB" id="1FVA">
    <property type="method" value="X-ray"/>
    <property type="resolution" value="1.70 A"/>
    <property type="chains" value="A/B=13-229"/>
</dbReference>
<dbReference type="PDB" id="1FVG">
    <property type="method" value="X-ray"/>
    <property type="resolution" value="1.60 A"/>
    <property type="chains" value="A=21-219"/>
</dbReference>
<dbReference type="PDBsum" id="1FVA"/>
<dbReference type="PDBsum" id="1FVG"/>
<dbReference type="SMR" id="P54149"/>
<dbReference type="BioGRID" id="158665">
    <property type="interactions" value="1"/>
</dbReference>
<dbReference type="FunCoup" id="P54149">
    <property type="interactions" value="1576"/>
</dbReference>
<dbReference type="STRING" id="9913.ENSBTAP00000065414"/>
<dbReference type="BindingDB" id="P54149"/>
<dbReference type="ChEMBL" id="CHEMBL2007622"/>
<dbReference type="PaxDb" id="9913-ENSBTAP00000028825"/>
<dbReference type="PeptideAtlas" id="P54149"/>
<dbReference type="Ensembl" id="ENSBTAT00000028825.7">
    <property type="protein sequence ID" value="ENSBTAP00000028825.5"/>
    <property type="gene ID" value="ENSBTAG00000021632.7"/>
</dbReference>
<dbReference type="GeneID" id="281312"/>
<dbReference type="KEGG" id="bta:281312"/>
<dbReference type="CTD" id="4482"/>
<dbReference type="VEuPathDB" id="HostDB:ENSBTAG00000021632"/>
<dbReference type="VGNC" id="VGNC:31705">
    <property type="gene designation" value="MSRA"/>
</dbReference>
<dbReference type="eggNOG" id="KOG1635">
    <property type="taxonomic scope" value="Eukaryota"/>
</dbReference>
<dbReference type="GeneTree" id="ENSGT00390000003823"/>
<dbReference type="HOGENOM" id="CLU_031040_10_3_1"/>
<dbReference type="InParanoid" id="P54149"/>
<dbReference type="OMA" id="LFWESHD"/>
<dbReference type="OrthoDB" id="77405at2759"/>
<dbReference type="TreeFam" id="TF353884"/>
<dbReference type="BRENDA" id="1.8.4.11">
    <property type="organism ID" value="908"/>
</dbReference>
<dbReference type="Reactome" id="R-BTA-5676934">
    <property type="pathway name" value="Protein repair"/>
</dbReference>
<dbReference type="EvolutionaryTrace" id="P54149"/>
<dbReference type="Proteomes" id="UP000009136">
    <property type="component" value="Chromosome 8"/>
</dbReference>
<dbReference type="Bgee" id="ENSBTAG00000021632">
    <property type="expression patterns" value="Expressed in metanephros cortex and 105 other cell types or tissues"/>
</dbReference>
<dbReference type="GO" id="GO:0005737">
    <property type="term" value="C:cytoplasm"/>
    <property type="evidence" value="ECO:0000318"/>
    <property type="project" value="GO_Central"/>
</dbReference>
<dbReference type="GO" id="GO:0005739">
    <property type="term" value="C:mitochondrion"/>
    <property type="evidence" value="ECO:0007669"/>
    <property type="project" value="UniProtKB-SubCell"/>
</dbReference>
<dbReference type="GO" id="GO:0036456">
    <property type="term" value="F:L-methionine-(S)-S-oxide reductase activity"/>
    <property type="evidence" value="ECO:0000318"/>
    <property type="project" value="GO_Central"/>
</dbReference>
<dbReference type="GO" id="GO:0008113">
    <property type="term" value="F:peptide-methionine (S)-S-oxide reductase activity"/>
    <property type="evidence" value="ECO:0000318"/>
    <property type="project" value="GO_Central"/>
</dbReference>
<dbReference type="GO" id="GO:0034599">
    <property type="term" value="P:cellular response to oxidative stress"/>
    <property type="evidence" value="ECO:0000318"/>
    <property type="project" value="GO_Central"/>
</dbReference>
<dbReference type="FunFam" id="3.30.1060.10:FF:000001">
    <property type="entry name" value="Peptide methionine sulfoxide reductase MsrA"/>
    <property type="match status" value="1"/>
</dbReference>
<dbReference type="Gene3D" id="3.30.1060.10">
    <property type="entry name" value="Peptide methionine sulphoxide reductase MsrA"/>
    <property type="match status" value="1"/>
</dbReference>
<dbReference type="HAMAP" id="MF_01401">
    <property type="entry name" value="MsrA"/>
    <property type="match status" value="1"/>
</dbReference>
<dbReference type="InterPro" id="IPR002569">
    <property type="entry name" value="Met_Sox_Rdtase_MsrA_dom"/>
</dbReference>
<dbReference type="InterPro" id="IPR036509">
    <property type="entry name" value="Met_Sox_Rdtase_MsrA_sf"/>
</dbReference>
<dbReference type="InterPro" id="IPR050162">
    <property type="entry name" value="MsrA_MetSO_reductase"/>
</dbReference>
<dbReference type="NCBIfam" id="TIGR00401">
    <property type="entry name" value="msrA"/>
    <property type="match status" value="1"/>
</dbReference>
<dbReference type="PANTHER" id="PTHR42799">
    <property type="entry name" value="MITOCHONDRIAL PEPTIDE METHIONINE SULFOXIDE REDUCTASE"/>
    <property type="match status" value="1"/>
</dbReference>
<dbReference type="PANTHER" id="PTHR42799:SF2">
    <property type="entry name" value="MITOCHONDRIAL PEPTIDE METHIONINE SULFOXIDE REDUCTASE"/>
    <property type="match status" value="1"/>
</dbReference>
<dbReference type="Pfam" id="PF01625">
    <property type="entry name" value="PMSR"/>
    <property type="match status" value="1"/>
</dbReference>
<dbReference type="SUPFAM" id="SSF55068">
    <property type="entry name" value="Peptide methionine sulfoxide reductase"/>
    <property type="match status" value="1"/>
</dbReference>